<dbReference type="GO" id="GO:0005576">
    <property type="term" value="C:extracellular region"/>
    <property type="evidence" value="ECO:0007669"/>
    <property type="project" value="UniProtKB-SubCell"/>
</dbReference>
<protein>
    <recommendedName>
        <fullName>Dynastin-6</fullName>
    </recommendedName>
</protein>
<organism>
    <name type="scientific">Limnodynastes salmini</name>
    <name type="common">Salmon-striped frog</name>
    <dbReference type="NCBI Taxonomy" id="39404"/>
    <lineage>
        <taxon>Eukaryota</taxon>
        <taxon>Metazoa</taxon>
        <taxon>Chordata</taxon>
        <taxon>Craniata</taxon>
        <taxon>Vertebrata</taxon>
        <taxon>Euteleostomi</taxon>
        <taxon>Amphibia</taxon>
        <taxon>Batrachia</taxon>
        <taxon>Anura</taxon>
        <taxon>Neobatrachia</taxon>
        <taxon>Myobatrachoidea</taxon>
        <taxon>Limnodynastidae</taxon>
        <taxon>Limnodynastes</taxon>
    </lineage>
</organism>
<comment type="subcellular location">
    <subcellularLocation>
        <location>Secreted</location>
    </subcellularLocation>
</comment>
<comment type="tissue specificity">
    <text>Expressed by the skin glands.</text>
</comment>
<comment type="mass spectrometry" mass="944.0" method="FAB" evidence="1"/>
<sequence length="10" mass="944">GAVSGLLTNL</sequence>
<feature type="peptide" id="PRO_0000043789" description="Dynastin-6">
    <location>
        <begin position="1"/>
        <end position="10"/>
    </location>
</feature>
<proteinExistence type="evidence at protein level"/>
<evidence type="ECO:0000269" key="1">
    <source ref="1"/>
</evidence>
<reference key="1">
    <citation type="journal article" date="1993" name="Aust. J. Chem.">
        <title>Peptides from Australian frogs. The structure of the dynastins from Limnodynastes salmini and fletcherin from Limnodynastes fletcheri.</title>
        <authorList>
            <person name="Bradford A.M."/>
            <person name="Raftery M.J."/>
            <person name="Bowie J.H."/>
            <person name="Wallace J.C."/>
            <person name="Tyler M.J."/>
        </authorList>
    </citation>
    <scope>PROTEIN SEQUENCE</scope>
    <scope>MASS SPECTROMETRY</scope>
    <source>
        <tissue>Skin secretion</tissue>
    </source>
</reference>
<accession>P82084</accession>
<name>DYS6_LIMSA</name>
<keyword id="KW-0903">Direct protein sequencing</keyword>
<keyword id="KW-0964">Secreted</keyword>